<evidence type="ECO:0000255" key="1">
    <source>
        <dbReference type="HAMAP-Rule" id="MF_00079"/>
    </source>
</evidence>
<gene>
    <name evidence="1" type="primary">hisG</name>
    <name type="ordered locus">Sbal195_2536</name>
</gene>
<protein>
    <recommendedName>
        <fullName evidence="1">ATP phosphoribosyltransferase</fullName>
        <shortName evidence="1">ATP-PRT</shortName>
        <shortName evidence="1">ATP-PRTase</shortName>
        <ecNumber evidence="1">2.4.2.17</ecNumber>
    </recommendedName>
</protein>
<dbReference type="EC" id="2.4.2.17" evidence="1"/>
<dbReference type="EMBL" id="CP000891">
    <property type="protein sequence ID" value="ABX49704.1"/>
    <property type="molecule type" value="Genomic_DNA"/>
</dbReference>
<dbReference type="RefSeq" id="WP_006086295.1">
    <property type="nucleotide sequence ID" value="NC_009997.1"/>
</dbReference>
<dbReference type="SMR" id="A9L4B4"/>
<dbReference type="GeneID" id="11774808"/>
<dbReference type="KEGG" id="sbn:Sbal195_2536"/>
<dbReference type="HOGENOM" id="CLU_038115_1_0_6"/>
<dbReference type="UniPathway" id="UPA00031">
    <property type="reaction ID" value="UER00006"/>
</dbReference>
<dbReference type="Proteomes" id="UP000000770">
    <property type="component" value="Chromosome"/>
</dbReference>
<dbReference type="GO" id="GO:0005737">
    <property type="term" value="C:cytoplasm"/>
    <property type="evidence" value="ECO:0007669"/>
    <property type="project" value="UniProtKB-SubCell"/>
</dbReference>
<dbReference type="GO" id="GO:0005524">
    <property type="term" value="F:ATP binding"/>
    <property type="evidence" value="ECO:0007669"/>
    <property type="project" value="UniProtKB-KW"/>
</dbReference>
<dbReference type="GO" id="GO:0003879">
    <property type="term" value="F:ATP phosphoribosyltransferase activity"/>
    <property type="evidence" value="ECO:0007669"/>
    <property type="project" value="UniProtKB-UniRule"/>
</dbReference>
<dbReference type="GO" id="GO:0000287">
    <property type="term" value="F:magnesium ion binding"/>
    <property type="evidence" value="ECO:0007669"/>
    <property type="project" value="UniProtKB-UniRule"/>
</dbReference>
<dbReference type="GO" id="GO:0000105">
    <property type="term" value="P:L-histidine biosynthetic process"/>
    <property type="evidence" value="ECO:0007669"/>
    <property type="project" value="UniProtKB-UniRule"/>
</dbReference>
<dbReference type="FunFam" id="3.30.70.120:FF:000002">
    <property type="entry name" value="ATP phosphoribosyltransferase"/>
    <property type="match status" value="1"/>
</dbReference>
<dbReference type="FunFam" id="3.40.190.10:FF:000008">
    <property type="entry name" value="ATP phosphoribosyltransferase"/>
    <property type="match status" value="1"/>
</dbReference>
<dbReference type="Gene3D" id="3.30.70.120">
    <property type="match status" value="1"/>
</dbReference>
<dbReference type="Gene3D" id="3.40.190.10">
    <property type="entry name" value="Periplasmic binding protein-like II"/>
    <property type="match status" value="2"/>
</dbReference>
<dbReference type="HAMAP" id="MF_00079">
    <property type="entry name" value="HisG_Long"/>
    <property type="match status" value="1"/>
</dbReference>
<dbReference type="InterPro" id="IPR020621">
    <property type="entry name" value="ATP-PRT_HisG_long"/>
</dbReference>
<dbReference type="InterPro" id="IPR013820">
    <property type="entry name" value="ATP_PRibTrfase_cat"/>
</dbReference>
<dbReference type="InterPro" id="IPR018198">
    <property type="entry name" value="ATP_PRibTrfase_CS"/>
</dbReference>
<dbReference type="InterPro" id="IPR001348">
    <property type="entry name" value="ATP_PRibTrfase_HisG"/>
</dbReference>
<dbReference type="InterPro" id="IPR013115">
    <property type="entry name" value="HisG_C"/>
</dbReference>
<dbReference type="InterPro" id="IPR011322">
    <property type="entry name" value="N-reg_PII-like_a/b"/>
</dbReference>
<dbReference type="InterPro" id="IPR015867">
    <property type="entry name" value="N-reg_PII/ATP_PRibTrfase_C"/>
</dbReference>
<dbReference type="NCBIfam" id="TIGR00070">
    <property type="entry name" value="hisG"/>
    <property type="match status" value="1"/>
</dbReference>
<dbReference type="NCBIfam" id="TIGR03455">
    <property type="entry name" value="HisG_C-term"/>
    <property type="match status" value="1"/>
</dbReference>
<dbReference type="PANTHER" id="PTHR21403:SF8">
    <property type="entry name" value="ATP PHOSPHORIBOSYLTRANSFERASE"/>
    <property type="match status" value="1"/>
</dbReference>
<dbReference type="PANTHER" id="PTHR21403">
    <property type="entry name" value="ATP PHOSPHORIBOSYLTRANSFERASE ATP-PRTASE"/>
    <property type="match status" value="1"/>
</dbReference>
<dbReference type="Pfam" id="PF01634">
    <property type="entry name" value="HisG"/>
    <property type="match status" value="1"/>
</dbReference>
<dbReference type="Pfam" id="PF08029">
    <property type="entry name" value="HisG_C"/>
    <property type="match status" value="1"/>
</dbReference>
<dbReference type="SUPFAM" id="SSF54913">
    <property type="entry name" value="GlnB-like"/>
    <property type="match status" value="1"/>
</dbReference>
<dbReference type="SUPFAM" id="SSF53850">
    <property type="entry name" value="Periplasmic binding protein-like II"/>
    <property type="match status" value="1"/>
</dbReference>
<dbReference type="PROSITE" id="PS01316">
    <property type="entry name" value="ATP_P_PHORIBOSYLTR"/>
    <property type="match status" value="1"/>
</dbReference>
<reference key="1">
    <citation type="submission" date="2007-11" db="EMBL/GenBank/DDBJ databases">
        <title>Complete sequence of chromosome of Shewanella baltica OS195.</title>
        <authorList>
            <consortium name="US DOE Joint Genome Institute"/>
            <person name="Copeland A."/>
            <person name="Lucas S."/>
            <person name="Lapidus A."/>
            <person name="Barry K."/>
            <person name="Glavina del Rio T."/>
            <person name="Dalin E."/>
            <person name="Tice H."/>
            <person name="Pitluck S."/>
            <person name="Chain P."/>
            <person name="Malfatti S."/>
            <person name="Shin M."/>
            <person name="Vergez L."/>
            <person name="Schmutz J."/>
            <person name="Larimer F."/>
            <person name="Land M."/>
            <person name="Hauser L."/>
            <person name="Kyrpides N."/>
            <person name="Kim E."/>
            <person name="Brettar I."/>
            <person name="Rodrigues J."/>
            <person name="Konstantinidis K."/>
            <person name="Klappenbach J."/>
            <person name="Hofle M."/>
            <person name="Tiedje J."/>
            <person name="Richardson P."/>
        </authorList>
    </citation>
    <scope>NUCLEOTIDE SEQUENCE [LARGE SCALE GENOMIC DNA]</scope>
    <source>
        <strain>OS195</strain>
    </source>
</reference>
<name>HIS1_SHEB9</name>
<proteinExistence type="inferred from homology"/>
<organism>
    <name type="scientific">Shewanella baltica (strain OS195)</name>
    <dbReference type="NCBI Taxonomy" id="399599"/>
    <lineage>
        <taxon>Bacteria</taxon>
        <taxon>Pseudomonadati</taxon>
        <taxon>Pseudomonadota</taxon>
        <taxon>Gammaproteobacteria</taxon>
        <taxon>Alteromonadales</taxon>
        <taxon>Shewanellaceae</taxon>
        <taxon>Shewanella</taxon>
    </lineage>
</organism>
<comment type="function">
    <text evidence="1">Catalyzes the condensation of ATP and 5-phosphoribose 1-diphosphate to form N'-(5'-phosphoribosyl)-ATP (PR-ATP). Has a crucial role in the pathway because the rate of histidine biosynthesis seems to be controlled primarily by regulation of HisG enzymatic activity.</text>
</comment>
<comment type="catalytic activity">
    <reaction evidence="1">
        <text>1-(5-phospho-beta-D-ribosyl)-ATP + diphosphate = 5-phospho-alpha-D-ribose 1-diphosphate + ATP</text>
        <dbReference type="Rhea" id="RHEA:18473"/>
        <dbReference type="ChEBI" id="CHEBI:30616"/>
        <dbReference type="ChEBI" id="CHEBI:33019"/>
        <dbReference type="ChEBI" id="CHEBI:58017"/>
        <dbReference type="ChEBI" id="CHEBI:73183"/>
        <dbReference type="EC" id="2.4.2.17"/>
    </reaction>
</comment>
<comment type="cofactor">
    <cofactor evidence="1">
        <name>Mg(2+)</name>
        <dbReference type="ChEBI" id="CHEBI:18420"/>
    </cofactor>
</comment>
<comment type="activity regulation">
    <text evidence="1">Feedback inhibited by histidine.</text>
</comment>
<comment type="pathway">
    <text evidence="1">Amino-acid biosynthesis; L-histidine biosynthesis; L-histidine from 5-phospho-alpha-D-ribose 1-diphosphate: step 1/9.</text>
</comment>
<comment type="subcellular location">
    <subcellularLocation>
        <location evidence="1">Cytoplasm</location>
    </subcellularLocation>
</comment>
<comment type="similarity">
    <text evidence="1">Belongs to the ATP phosphoribosyltransferase family. Long subfamily.</text>
</comment>
<sequence>MTESNRLRIAIQKSGRLSTDSQQLLKSCGVKFSINEQRLIAHADNMPIDLLRVRDDDIPGLVMDGVVDMGIIGENVLEEEQIERQTLNKPADCLKLRQLDFGSCRLSLAVPTEFSYADASSLEGLRIATSYPNLLRRFMQQKGITYRDCMLKGSVEVAPRAGLADGICDLVSTGATLEANGLYETEVIYRSMACIIQSTQTQTPTKQALIDKILSRVNGVIRARESKYILLHAPTETLDQIVALLPGAENPTVLPLNDDTNRVAIHAVSTEDLFWDTMEQLTALGASSILVMPIEKMMG</sequence>
<feature type="chain" id="PRO_1000075265" description="ATP phosphoribosyltransferase">
    <location>
        <begin position="1"/>
        <end position="299"/>
    </location>
</feature>
<accession>A9L4B4</accession>
<keyword id="KW-0028">Amino-acid biosynthesis</keyword>
<keyword id="KW-0067">ATP-binding</keyword>
<keyword id="KW-0963">Cytoplasm</keyword>
<keyword id="KW-0328">Glycosyltransferase</keyword>
<keyword id="KW-0368">Histidine biosynthesis</keyword>
<keyword id="KW-0460">Magnesium</keyword>
<keyword id="KW-0479">Metal-binding</keyword>
<keyword id="KW-0547">Nucleotide-binding</keyword>
<keyword id="KW-0808">Transferase</keyword>